<comment type="function">
    <text evidence="1">Facilitates the functional incorporation of the urease nickel metallocenter. This process requires GTP hydrolysis, probably effectuated by UreG.</text>
</comment>
<comment type="subunit">
    <text evidence="1">Homodimer. UreD, UreF and UreG form a complex that acts as a GTP-hydrolysis-dependent molecular chaperone, activating the urease apoprotein by helping to assemble the nickel containing metallocenter of UreC. The UreE protein probably delivers the nickel.</text>
</comment>
<comment type="subcellular location">
    <subcellularLocation>
        <location evidence="1">Cytoplasm</location>
    </subcellularLocation>
</comment>
<comment type="similarity">
    <text evidence="1">Belongs to the SIMIBI class G3E GTPase family. UreG subfamily.</text>
</comment>
<reference key="1">
    <citation type="journal article" date="2009" name="Appl. Environ. Microbiol.">
        <title>Rhizobium sp. strain NGR234 possesses a remarkable number of secretion systems.</title>
        <authorList>
            <person name="Schmeisser C."/>
            <person name="Liesegang H."/>
            <person name="Krysciak D."/>
            <person name="Bakkou N."/>
            <person name="Le Quere A."/>
            <person name="Wollherr A."/>
            <person name="Heinemeyer I."/>
            <person name="Morgenstern B."/>
            <person name="Pommerening-Roeser A."/>
            <person name="Flores M."/>
            <person name="Palacios R."/>
            <person name="Brenner S."/>
            <person name="Gottschalk G."/>
            <person name="Schmitz R.A."/>
            <person name="Broughton W.J."/>
            <person name="Perret X."/>
            <person name="Strittmatter A.W."/>
            <person name="Streit W.R."/>
        </authorList>
    </citation>
    <scope>NUCLEOTIDE SEQUENCE [LARGE SCALE GENOMIC DNA]</scope>
    <source>
        <strain>NBRC 101917 / NGR234</strain>
    </source>
</reference>
<organism>
    <name type="scientific">Sinorhizobium fredii (strain NBRC 101917 / NGR234)</name>
    <dbReference type="NCBI Taxonomy" id="394"/>
    <lineage>
        <taxon>Bacteria</taxon>
        <taxon>Pseudomonadati</taxon>
        <taxon>Pseudomonadota</taxon>
        <taxon>Alphaproteobacteria</taxon>
        <taxon>Hyphomicrobiales</taxon>
        <taxon>Rhizobiaceae</taxon>
        <taxon>Sinorhizobium/Ensifer group</taxon>
        <taxon>Sinorhizobium</taxon>
    </lineage>
</organism>
<feature type="chain" id="PRO_1000184267" description="Urease accessory protein UreG">
    <location>
        <begin position="1"/>
        <end position="203"/>
    </location>
</feature>
<feature type="binding site" evidence="1">
    <location>
        <begin position="14"/>
        <end position="21"/>
    </location>
    <ligand>
        <name>GTP</name>
        <dbReference type="ChEBI" id="CHEBI:37565"/>
    </ligand>
</feature>
<accession>C3MGH8</accession>
<keyword id="KW-0143">Chaperone</keyword>
<keyword id="KW-0963">Cytoplasm</keyword>
<keyword id="KW-0342">GTP-binding</keyword>
<keyword id="KW-0996">Nickel insertion</keyword>
<keyword id="KW-0547">Nucleotide-binding</keyword>
<keyword id="KW-1185">Reference proteome</keyword>
<dbReference type="EMBL" id="CP001389">
    <property type="protein sequence ID" value="ACP26250.1"/>
    <property type="molecule type" value="Genomic_DNA"/>
</dbReference>
<dbReference type="RefSeq" id="WP_012709008.1">
    <property type="nucleotide sequence ID" value="NC_012587.1"/>
</dbReference>
<dbReference type="RefSeq" id="YP_002827003.1">
    <property type="nucleotide sequence ID" value="NC_012587.1"/>
</dbReference>
<dbReference type="SMR" id="C3MGH8"/>
<dbReference type="STRING" id="394.NGR_c24930"/>
<dbReference type="KEGG" id="rhi:NGR_c24930"/>
<dbReference type="PATRIC" id="fig|394.7.peg.5315"/>
<dbReference type="eggNOG" id="COG0378">
    <property type="taxonomic scope" value="Bacteria"/>
</dbReference>
<dbReference type="HOGENOM" id="CLU_072144_1_0_5"/>
<dbReference type="OrthoDB" id="9802035at2"/>
<dbReference type="Proteomes" id="UP000001054">
    <property type="component" value="Chromosome"/>
</dbReference>
<dbReference type="GO" id="GO:0005737">
    <property type="term" value="C:cytoplasm"/>
    <property type="evidence" value="ECO:0007669"/>
    <property type="project" value="UniProtKB-SubCell"/>
</dbReference>
<dbReference type="GO" id="GO:0005525">
    <property type="term" value="F:GTP binding"/>
    <property type="evidence" value="ECO:0007669"/>
    <property type="project" value="UniProtKB-KW"/>
</dbReference>
<dbReference type="GO" id="GO:0003924">
    <property type="term" value="F:GTPase activity"/>
    <property type="evidence" value="ECO:0007669"/>
    <property type="project" value="InterPro"/>
</dbReference>
<dbReference type="GO" id="GO:0016151">
    <property type="term" value="F:nickel cation binding"/>
    <property type="evidence" value="ECO:0007669"/>
    <property type="project" value="UniProtKB-UniRule"/>
</dbReference>
<dbReference type="GO" id="GO:0043419">
    <property type="term" value="P:urea catabolic process"/>
    <property type="evidence" value="ECO:0007669"/>
    <property type="project" value="InterPro"/>
</dbReference>
<dbReference type="CDD" id="cd05540">
    <property type="entry name" value="UreG"/>
    <property type="match status" value="1"/>
</dbReference>
<dbReference type="FunFam" id="3.40.50.300:FF:000208">
    <property type="entry name" value="Urease accessory protein UreG"/>
    <property type="match status" value="1"/>
</dbReference>
<dbReference type="Gene3D" id="3.40.50.300">
    <property type="entry name" value="P-loop containing nucleotide triphosphate hydrolases"/>
    <property type="match status" value="1"/>
</dbReference>
<dbReference type="HAMAP" id="MF_01389">
    <property type="entry name" value="UreG"/>
    <property type="match status" value="1"/>
</dbReference>
<dbReference type="InterPro" id="IPR003495">
    <property type="entry name" value="CobW/HypB/UreG_nucleotide-bd"/>
</dbReference>
<dbReference type="InterPro" id="IPR027417">
    <property type="entry name" value="P-loop_NTPase"/>
</dbReference>
<dbReference type="InterPro" id="IPR004400">
    <property type="entry name" value="UreG"/>
</dbReference>
<dbReference type="NCBIfam" id="TIGR00101">
    <property type="entry name" value="ureG"/>
    <property type="match status" value="1"/>
</dbReference>
<dbReference type="PANTHER" id="PTHR31715">
    <property type="entry name" value="UREASE ACCESSORY PROTEIN G"/>
    <property type="match status" value="1"/>
</dbReference>
<dbReference type="PANTHER" id="PTHR31715:SF0">
    <property type="entry name" value="UREASE ACCESSORY PROTEIN G"/>
    <property type="match status" value="1"/>
</dbReference>
<dbReference type="Pfam" id="PF02492">
    <property type="entry name" value="cobW"/>
    <property type="match status" value="1"/>
</dbReference>
<dbReference type="PIRSF" id="PIRSF005624">
    <property type="entry name" value="Ni-bind_GTPase"/>
    <property type="match status" value="1"/>
</dbReference>
<dbReference type="SUPFAM" id="SSF52540">
    <property type="entry name" value="P-loop containing nucleoside triphosphate hydrolases"/>
    <property type="match status" value="1"/>
</dbReference>
<protein>
    <recommendedName>
        <fullName evidence="1">Urease accessory protein UreG</fullName>
    </recommendedName>
</protein>
<evidence type="ECO:0000255" key="1">
    <source>
        <dbReference type="HAMAP-Rule" id="MF_01389"/>
    </source>
</evidence>
<proteinExistence type="inferred from homology"/>
<name>UREG_SINFN</name>
<gene>
    <name evidence="1" type="primary">ureG</name>
    <name type="ordered locus">NGR_c24930</name>
</gene>
<sequence>MPSKNGPLRVGIGGPVGSGKTALTDKLCKAMREKYSVAVVTNDIYTKEDAEALVRMQALPSERIVGVETGGCPHTAIREDASINLQAIADLNRRIPDLDVVFIESGGDNLAATFSPDLADLTIYVISVCQGEEIPRKGGPGITKSDLLVINKKDLAPYVGADLEVMEHDATRMRAEKPFVFSDMKRGEGIERIVEFLTVQGGL</sequence>